<accession>Q1MA19</accession>
<reference key="1">
    <citation type="journal article" date="2006" name="Genome Biol.">
        <title>The genome of Rhizobium leguminosarum has recognizable core and accessory components.</title>
        <authorList>
            <person name="Young J.P.W."/>
            <person name="Crossman L.C."/>
            <person name="Johnston A.W.B."/>
            <person name="Thomson N.R."/>
            <person name="Ghazoui Z.F."/>
            <person name="Hull K.H."/>
            <person name="Wexler M."/>
            <person name="Curson A.R.J."/>
            <person name="Todd J.D."/>
            <person name="Poole P.S."/>
            <person name="Mauchline T.H."/>
            <person name="East A.K."/>
            <person name="Quail M.A."/>
            <person name="Churcher C."/>
            <person name="Arrowsmith C."/>
            <person name="Cherevach I."/>
            <person name="Chillingworth T."/>
            <person name="Clarke K."/>
            <person name="Cronin A."/>
            <person name="Davis P."/>
            <person name="Fraser A."/>
            <person name="Hance Z."/>
            <person name="Hauser H."/>
            <person name="Jagels K."/>
            <person name="Moule S."/>
            <person name="Mungall K."/>
            <person name="Norbertczak H."/>
            <person name="Rabbinowitsch E."/>
            <person name="Sanders M."/>
            <person name="Simmonds M."/>
            <person name="Whitehead S."/>
            <person name="Parkhill J."/>
        </authorList>
    </citation>
    <scope>NUCLEOTIDE SEQUENCE [LARGE SCALE GENOMIC DNA]</scope>
    <source>
        <strain>DSM 114642 / LMG 32736 / 3841</strain>
    </source>
</reference>
<comment type="function">
    <text evidence="1">NAD-binding protein involved in the addition of a carboxymethylaminomethyl (cmnm) group at the wobble position (U34) of certain tRNAs, forming tRNA-cmnm(5)s(2)U34.</text>
</comment>
<comment type="cofactor">
    <cofactor evidence="1">
        <name>FAD</name>
        <dbReference type="ChEBI" id="CHEBI:57692"/>
    </cofactor>
</comment>
<comment type="subunit">
    <text evidence="1">Homodimer. Heterotetramer of two MnmE and two MnmG subunits.</text>
</comment>
<comment type="subcellular location">
    <subcellularLocation>
        <location evidence="1">Cytoplasm</location>
    </subcellularLocation>
</comment>
<comment type="similarity">
    <text evidence="1">Belongs to the MnmG family.</text>
</comment>
<keyword id="KW-0963">Cytoplasm</keyword>
<keyword id="KW-0274">FAD</keyword>
<keyword id="KW-0285">Flavoprotein</keyword>
<keyword id="KW-0520">NAD</keyword>
<keyword id="KW-0819">tRNA processing</keyword>
<sequence length="625" mass="67596">MTDNVFDVIVIGGGHAGSEAASAAARLGAKTALITHRRDTIGVMSCNPAIGGLGKGHLVREIDAMDGLMGRVADVAGIQFRMLNKKKGAAVRGPRTQADRKLYRLAMLAAIEATPDLDIIEGDAFDLDVVDGCVAGVIMKDDRTLKAPAVVLTTGTFLRGLIHIGSEKTPAGRVGEAPSIGLSATLARLGLRLGRLKTGTPARLDGKTIDWQSIGRQGADEELIPFSFMTDTITTRQIECGVTRTTEATHRIIVDNIMRSAMYSGQIEGVGPRYCPSIEDKLVKFGERDGHQVFLEPEGLDDDTVYPNGISTSLPAEVQADFIKTIPGLEAARILQPGYAIEYDHVDPRELTPSLEVKRLRGLFLAGQINGTTGYEEAAAQGLAAGLNAALRSSDSDPFHFSRTSSYIGVMIDDLTSRGVTEPYRMFTSRAEYRLSLRADNADMRLTPLAMRVGCVSDARVRRFTSYQAEIETCRALLQSLAVTPNEARRAGLNINLDGQRRTAYDLLSYPNYSFAALSDVWPEKLGMIGPKVAEALEIEAGYSVYLDRQASAIADQQRDEERQIPLDFNYDALAGLSNELKVKLGTARPFNIAQAAIVEGMTPAAIALLLVHLRRLSSAERNSA</sequence>
<feature type="chain" id="PRO_0000345322" description="tRNA uridine 5-carboxymethylaminomethyl modification enzyme MnmG">
    <location>
        <begin position="1"/>
        <end position="625"/>
    </location>
</feature>
<feature type="binding site" evidence="1">
    <location>
        <begin position="12"/>
        <end position="17"/>
    </location>
    <ligand>
        <name>FAD</name>
        <dbReference type="ChEBI" id="CHEBI:57692"/>
    </ligand>
</feature>
<feature type="binding site" evidence="1">
    <location>
        <begin position="271"/>
        <end position="285"/>
    </location>
    <ligand>
        <name>NAD(+)</name>
        <dbReference type="ChEBI" id="CHEBI:57540"/>
    </ligand>
</feature>
<gene>
    <name evidence="1" type="primary">mnmG</name>
    <name evidence="1" type="synonym">gidA</name>
    <name type="ordered locus">RL4738</name>
</gene>
<dbReference type="EMBL" id="AM236080">
    <property type="protein sequence ID" value="CAK10221.1"/>
    <property type="molecule type" value="Genomic_DNA"/>
</dbReference>
<dbReference type="RefSeq" id="WP_011654067.1">
    <property type="nucleotide sequence ID" value="NC_008380.1"/>
</dbReference>
<dbReference type="SMR" id="Q1MA19"/>
<dbReference type="EnsemblBacteria" id="CAK10221">
    <property type="protein sequence ID" value="CAK10221"/>
    <property type="gene ID" value="RL4738"/>
</dbReference>
<dbReference type="KEGG" id="rle:RL4738"/>
<dbReference type="eggNOG" id="COG0445">
    <property type="taxonomic scope" value="Bacteria"/>
</dbReference>
<dbReference type="HOGENOM" id="CLU_007831_2_2_5"/>
<dbReference type="Proteomes" id="UP000006575">
    <property type="component" value="Chromosome"/>
</dbReference>
<dbReference type="GO" id="GO:0005829">
    <property type="term" value="C:cytosol"/>
    <property type="evidence" value="ECO:0007669"/>
    <property type="project" value="TreeGrafter"/>
</dbReference>
<dbReference type="GO" id="GO:0050660">
    <property type="term" value="F:flavin adenine dinucleotide binding"/>
    <property type="evidence" value="ECO:0007669"/>
    <property type="project" value="UniProtKB-UniRule"/>
</dbReference>
<dbReference type="GO" id="GO:0030488">
    <property type="term" value="P:tRNA methylation"/>
    <property type="evidence" value="ECO:0007669"/>
    <property type="project" value="TreeGrafter"/>
</dbReference>
<dbReference type="GO" id="GO:0002098">
    <property type="term" value="P:tRNA wobble uridine modification"/>
    <property type="evidence" value="ECO:0007669"/>
    <property type="project" value="InterPro"/>
</dbReference>
<dbReference type="FunFam" id="3.50.50.60:FF:000082">
    <property type="entry name" value="protein MTO1 homolog, mitochondrial isoform X1"/>
    <property type="match status" value="1"/>
</dbReference>
<dbReference type="FunFam" id="3.50.50.60:FF:000002">
    <property type="entry name" value="tRNA uridine 5-carboxymethylaminomethyl modification enzyme MnmG"/>
    <property type="match status" value="1"/>
</dbReference>
<dbReference type="Gene3D" id="3.50.50.60">
    <property type="entry name" value="FAD/NAD(P)-binding domain"/>
    <property type="match status" value="2"/>
</dbReference>
<dbReference type="Gene3D" id="1.10.150.570">
    <property type="entry name" value="GidA associated domain, C-terminal subdomain"/>
    <property type="match status" value="1"/>
</dbReference>
<dbReference type="Gene3D" id="1.10.10.1800">
    <property type="entry name" value="tRNA uridine 5-carboxymethylaminomethyl modification enzyme MnmG/GidA"/>
    <property type="match status" value="1"/>
</dbReference>
<dbReference type="HAMAP" id="MF_00129">
    <property type="entry name" value="MnmG_GidA"/>
    <property type="match status" value="1"/>
</dbReference>
<dbReference type="InterPro" id="IPR036188">
    <property type="entry name" value="FAD/NAD-bd_sf"/>
</dbReference>
<dbReference type="InterPro" id="IPR049312">
    <property type="entry name" value="GIDA_C_N"/>
</dbReference>
<dbReference type="InterPro" id="IPR004416">
    <property type="entry name" value="MnmG"/>
</dbReference>
<dbReference type="InterPro" id="IPR002218">
    <property type="entry name" value="MnmG-rel"/>
</dbReference>
<dbReference type="InterPro" id="IPR020595">
    <property type="entry name" value="MnmG-rel_CS"/>
</dbReference>
<dbReference type="InterPro" id="IPR026904">
    <property type="entry name" value="MnmG_C"/>
</dbReference>
<dbReference type="InterPro" id="IPR047001">
    <property type="entry name" value="MnmG_C_subdom"/>
</dbReference>
<dbReference type="InterPro" id="IPR044920">
    <property type="entry name" value="MnmG_C_subdom_sf"/>
</dbReference>
<dbReference type="InterPro" id="IPR040131">
    <property type="entry name" value="MnmG_N"/>
</dbReference>
<dbReference type="NCBIfam" id="TIGR00136">
    <property type="entry name" value="mnmG_gidA"/>
    <property type="match status" value="1"/>
</dbReference>
<dbReference type="PANTHER" id="PTHR11806">
    <property type="entry name" value="GLUCOSE INHIBITED DIVISION PROTEIN A"/>
    <property type="match status" value="1"/>
</dbReference>
<dbReference type="PANTHER" id="PTHR11806:SF0">
    <property type="entry name" value="PROTEIN MTO1 HOMOLOG, MITOCHONDRIAL"/>
    <property type="match status" value="1"/>
</dbReference>
<dbReference type="Pfam" id="PF01134">
    <property type="entry name" value="GIDA"/>
    <property type="match status" value="1"/>
</dbReference>
<dbReference type="Pfam" id="PF21680">
    <property type="entry name" value="GIDA_C_1st"/>
    <property type="match status" value="1"/>
</dbReference>
<dbReference type="Pfam" id="PF13932">
    <property type="entry name" value="SAM_GIDA_C"/>
    <property type="match status" value="1"/>
</dbReference>
<dbReference type="SMART" id="SM01228">
    <property type="entry name" value="GIDA_assoc_3"/>
    <property type="match status" value="1"/>
</dbReference>
<dbReference type="SUPFAM" id="SSF51905">
    <property type="entry name" value="FAD/NAD(P)-binding domain"/>
    <property type="match status" value="1"/>
</dbReference>
<dbReference type="PROSITE" id="PS01280">
    <property type="entry name" value="GIDA_1"/>
    <property type="match status" value="1"/>
</dbReference>
<dbReference type="PROSITE" id="PS01281">
    <property type="entry name" value="GIDA_2"/>
    <property type="match status" value="1"/>
</dbReference>
<protein>
    <recommendedName>
        <fullName evidence="1">tRNA uridine 5-carboxymethylaminomethyl modification enzyme MnmG</fullName>
    </recommendedName>
    <alternativeName>
        <fullName evidence="1">Glucose-inhibited division protein A</fullName>
    </alternativeName>
</protein>
<proteinExistence type="inferred from homology"/>
<evidence type="ECO:0000255" key="1">
    <source>
        <dbReference type="HAMAP-Rule" id="MF_00129"/>
    </source>
</evidence>
<organism>
    <name type="scientific">Rhizobium johnstonii (strain DSM 114642 / LMG 32736 / 3841)</name>
    <name type="common">Rhizobium leguminosarum bv. viciae</name>
    <dbReference type="NCBI Taxonomy" id="216596"/>
    <lineage>
        <taxon>Bacteria</taxon>
        <taxon>Pseudomonadati</taxon>
        <taxon>Pseudomonadota</taxon>
        <taxon>Alphaproteobacteria</taxon>
        <taxon>Hyphomicrobiales</taxon>
        <taxon>Rhizobiaceae</taxon>
        <taxon>Rhizobium/Agrobacterium group</taxon>
        <taxon>Rhizobium</taxon>
        <taxon>Rhizobium johnstonii</taxon>
    </lineage>
</organism>
<name>MNMG_RHIJ3</name>